<name>PANC_POLSJ</name>
<proteinExistence type="inferred from homology"/>
<keyword id="KW-0067">ATP-binding</keyword>
<keyword id="KW-0963">Cytoplasm</keyword>
<keyword id="KW-0436">Ligase</keyword>
<keyword id="KW-0547">Nucleotide-binding</keyword>
<keyword id="KW-0566">Pantothenate biosynthesis</keyword>
<keyword id="KW-1185">Reference proteome</keyword>
<protein>
    <recommendedName>
        <fullName evidence="1">Pantothenate synthetase</fullName>
        <shortName evidence="1">PS</shortName>
        <ecNumber evidence="1">6.3.2.1</ecNumber>
    </recommendedName>
    <alternativeName>
        <fullName evidence="1">Pantoate--beta-alanine ligase</fullName>
    </alternativeName>
    <alternativeName>
        <fullName evidence="1">Pantoate-activating enzyme</fullName>
    </alternativeName>
</protein>
<dbReference type="EC" id="6.3.2.1" evidence="1"/>
<dbReference type="EMBL" id="CP000316">
    <property type="protein sequence ID" value="ABE42851.1"/>
    <property type="molecule type" value="Genomic_DNA"/>
</dbReference>
<dbReference type="RefSeq" id="WP_011481853.1">
    <property type="nucleotide sequence ID" value="NC_007948.1"/>
</dbReference>
<dbReference type="SMR" id="Q12F41"/>
<dbReference type="STRING" id="296591.Bpro_0895"/>
<dbReference type="KEGG" id="pol:Bpro_0895"/>
<dbReference type="eggNOG" id="COG0414">
    <property type="taxonomic scope" value="Bacteria"/>
</dbReference>
<dbReference type="HOGENOM" id="CLU_047148_0_0_4"/>
<dbReference type="OrthoDB" id="9773087at2"/>
<dbReference type="UniPathway" id="UPA00028">
    <property type="reaction ID" value="UER00005"/>
</dbReference>
<dbReference type="Proteomes" id="UP000001983">
    <property type="component" value="Chromosome"/>
</dbReference>
<dbReference type="GO" id="GO:0005829">
    <property type="term" value="C:cytosol"/>
    <property type="evidence" value="ECO:0007669"/>
    <property type="project" value="TreeGrafter"/>
</dbReference>
<dbReference type="GO" id="GO:0005524">
    <property type="term" value="F:ATP binding"/>
    <property type="evidence" value="ECO:0007669"/>
    <property type="project" value="UniProtKB-KW"/>
</dbReference>
<dbReference type="GO" id="GO:0004592">
    <property type="term" value="F:pantoate-beta-alanine ligase activity"/>
    <property type="evidence" value="ECO:0007669"/>
    <property type="project" value="UniProtKB-UniRule"/>
</dbReference>
<dbReference type="GO" id="GO:0015940">
    <property type="term" value="P:pantothenate biosynthetic process"/>
    <property type="evidence" value="ECO:0007669"/>
    <property type="project" value="UniProtKB-UniRule"/>
</dbReference>
<dbReference type="CDD" id="cd00560">
    <property type="entry name" value="PanC"/>
    <property type="match status" value="1"/>
</dbReference>
<dbReference type="Gene3D" id="3.40.50.620">
    <property type="entry name" value="HUPs"/>
    <property type="match status" value="1"/>
</dbReference>
<dbReference type="Gene3D" id="3.30.1300.10">
    <property type="entry name" value="Pantoate-beta-alanine ligase, C-terminal domain"/>
    <property type="match status" value="1"/>
</dbReference>
<dbReference type="HAMAP" id="MF_00158">
    <property type="entry name" value="PanC"/>
    <property type="match status" value="1"/>
</dbReference>
<dbReference type="InterPro" id="IPR003721">
    <property type="entry name" value="Pantoate_ligase"/>
</dbReference>
<dbReference type="InterPro" id="IPR042176">
    <property type="entry name" value="Pantoate_ligase_C"/>
</dbReference>
<dbReference type="InterPro" id="IPR014729">
    <property type="entry name" value="Rossmann-like_a/b/a_fold"/>
</dbReference>
<dbReference type="NCBIfam" id="TIGR00018">
    <property type="entry name" value="panC"/>
    <property type="match status" value="1"/>
</dbReference>
<dbReference type="PANTHER" id="PTHR21299">
    <property type="entry name" value="CYTIDYLATE KINASE/PANTOATE-BETA-ALANINE LIGASE"/>
    <property type="match status" value="1"/>
</dbReference>
<dbReference type="PANTHER" id="PTHR21299:SF1">
    <property type="entry name" value="PANTOATE--BETA-ALANINE LIGASE"/>
    <property type="match status" value="1"/>
</dbReference>
<dbReference type="Pfam" id="PF02569">
    <property type="entry name" value="Pantoate_ligase"/>
    <property type="match status" value="1"/>
</dbReference>
<dbReference type="SUPFAM" id="SSF52374">
    <property type="entry name" value="Nucleotidylyl transferase"/>
    <property type="match status" value="1"/>
</dbReference>
<comment type="function">
    <text evidence="1">Catalyzes the condensation of pantoate with beta-alanine in an ATP-dependent reaction via a pantoyl-adenylate intermediate.</text>
</comment>
<comment type="catalytic activity">
    <reaction evidence="1">
        <text>(R)-pantoate + beta-alanine + ATP = (R)-pantothenate + AMP + diphosphate + H(+)</text>
        <dbReference type="Rhea" id="RHEA:10912"/>
        <dbReference type="ChEBI" id="CHEBI:15378"/>
        <dbReference type="ChEBI" id="CHEBI:15980"/>
        <dbReference type="ChEBI" id="CHEBI:29032"/>
        <dbReference type="ChEBI" id="CHEBI:30616"/>
        <dbReference type="ChEBI" id="CHEBI:33019"/>
        <dbReference type="ChEBI" id="CHEBI:57966"/>
        <dbReference type="ChEBI" id="CHEBI:456215"/>
        <dbReference type="EC" id="6.3.2.1"/>
    </reaction>
</comment>
<comment type="pathway">
    <text evidence="1">Cofactor biosynthesis; (R)-pantothenate biosynthesis; (R)-pantothenate from (R)-pantoate and beta-alanine: step 1/1.</text>
</comment>
<comment type="subunit">
    <text evidence="1">Homodimer.</text>
</comment>
<comment type="subcellular location">
    <subcellularLocation>
        <location evidence="1">Cytoplasm</location>
    </subcellularLocation>
</comment>
<comment type="miscellaneous">
    <text evidence="1">The reaction proceeds by a bi uni uni bi ping pong mechanism.</text>
</comment>
<comment type="similarity">
    <text evidence="1">Belongs to the pantothenate synthetase family.</text>
</comment>
<accession>Q12F41</accession>
<organism>
    <name type="scientific">Polaromonas sp. (strain JS666 / ATCC BAA-500)</name>
    <dbReference type="NCBI Taxonomy" id="296591"/>
    <lineage>
        <taxon>Bacteria</taxon>
        <taxon>Pseudomonadati</taxon>
        <taxon>Pseudomonadota</taxon>
        <taxon>Betaproteobacteria</taxon>
        <taxon>Burkholderiales</taxon>
        <taxon>Comamonadaceae</taxon>
        <taxon>Polaromonas</taxon>
    </lineage>
</organism>
<reference key="1">
    <citation type="journal article" date="2008" name="Appl. Environ. Microbiol.">
        <title>The genome of Polaromonas sp. strain JS666: insights into the evolution of a hydrocarbon- and xenobiotic-degrading bacterium, and features of relevance to biotechnology.</title>
        <authorList>
            <person name="Mattes T.E."/>
            <person name="Alexander A.K."/>
            <person name="Richardson P.M."/>
            <person name="Munk A.C."/>
            <person name="Han C.S."/>
            <person name="Stothard P."/>
            <person name="Coleman N.V."/>
        </authorList>
    </citation>
    <scope>NUCLEOTIDE SEQUENCE [LARGE SCALE GENOMIC DNA]</scope>
    <source>
        <strain>JS666 / ATCC BAA-500</strain>
    </source>
</reference>
<sequence>MHIVHSIAELREKLAPFQRPAFVPTMGNLHDGHIALVKQAKPLGDVTVSSIFVNRLQFAPHEDFDSYPRTLDADAQRLEAAGCNVLFAPREKELYPEPQTYKIHPATDLGDILEGHFRPGFFIGVSTVVLKLFSCVYAGKPSGVAAFGKKDYQQVLVVRRMVQQFALPIEILAGETQRAADGLALSSRNSYLSPNERIEAAQLSKALKALGDAARATPTPDLLALEAQAMQALARRGWKPDYLTVRRRADLQPPQGPLASEPLVVLGAAKLGNTRLIDNLEI</sequence>
<gene>
    <name evidence="1" type="primary">panC</name>
    <name type="ordered locus">Bpro_0895</name>
</gene>
<feature type="chain" id="PRO_0000305510" description="Pantothenate synthetase">
    <location>
        <begin position="1"/>
        <end position="282"/>
    </location>
</feature>
<feature type="active site" description="Proton donor" evidence="1">
    <location>
        <position position="33"/>
    </location>
</feature>
<feature type="binding site" evidence="1">
    <location>
        <begin position="26"/>
        <end position="33"/>
    </location>
    <ligand>
        <name>ATP</name>
        <dbReference type="ChEBI" id="CHEBI:30616"/>
    </ligand>
</feature>
<feature type="binding site" evidence="1">
    <location>
        <position position="57"/>
    </location>
    <ligand>
        <name>(R)-pantoate</name>
        <dbReference type="ChEBI" id="CHEBI:15980"/>
    </ligand>
</feature>
<feature type="binding site" evidence="1">
    <location>
        <position position="57"/>
    </location>
    <ligand>
        <name>beta-alanine</name>
        <dbReference type="ChEBI" id="CHEBI:57966"/>
    </ligand>
</feature>
<feature type="binding site" evidence="1">
    <location>
        <begin position="148"/>
        <end position="151"/>
    </location>
    <ligand>
        <name>ATP</name>
        <dbReference type="ChEBI" id="CHEBI:30616"/>
    </ligand>
</feature>
<feature type="binding site" evidence="1">
    <location>
        <position position="154"/>
    </location>
    <ligand>
        <name>(R)-pantoate</name>
        <dbReference type="ChEBI" id="CHEBI:15980"/>
    </ligand>
</feature>
<feature type="binding site" evidence="1">
    <location>
        <begin position="185"/>
        <end position="188"/>
    </location>
    <ligand>
        <name>ATP</name>
        <dbReference type="ChEBI" id="CHEBI:30616"/>
    </ligand>
</feature>
<evidence type="ECO:0000255" key="1">
    <source>
        <dbReference type="HAMAP-Rule" id="MF_00158"/>
    </source>
</evidence>